<reference key="1">
    <citation type="submission" date="2007-11" db="EMBL/GenBank/DDBJ databases">
        <title>Complete sequence of chromosome of Shewanella baltica OS195.</title>
        <authorList>
            <consortium name="US DOE Joint Genome Institute"/>
            <person name="Copeland A."/>
            <person name="Lucas S."/>
            <person name="Lapidus A."/>
            <person name="Barry K."/>
            <person name="Glavina del Rio T."/>
            <person name="Dalin E."/>
            <person name="Tice H."/>
            <person name="Pitluck S."/>
            <person name="Chain P."/>
            <person name="Malfatti S."/>
            <person name="Shin M."/>
            <person name="Vergez L."/>
            <person name="Schmutz J."/>
            <person name="Larimer F."/>
            <person name="Land M."/>
            <person name="Hauser L."/>
            <person name="Kyrpides N."/>
            <person name="Kim E."/>
            <person name="Brettar I."/>
            <person name="Rodrigues J."/>
            <person name="Konstantinidis K."/>
            <person name="Klappenbach J."/>
            <person name="Hofle M."/>
            <person name="Tiedje J."/>
            <person name="Richardson P."/>
        </authorList>
    </citation>
    <scope>NUCLEOTIDE SEQUENCE [LARGE SCALE GENOMIC DNA]</scope>
    <source>
        <strain>OS195</strain>
    </source>
</reference>
<sequence length="573" mass="62961">MRTENTATLNLIWGALILEELARLGVQHVCMAPGSRSTPLTLAAAQQTKLQRHLHFDERGLGFMALGLAKASRAPVAIITTSGTAVANLYPAIVEAWLTHVPLIVLSGDRPPELLGCGANQAIVQPGIFANYATQVNLPTPDAHIAPQALLTTVDEAVANQTRPVHINCMYREPLYPSELSGVILDTESPYLKPLQTWLQLARPYTQYGKCKQLSSPSDDAIMRFVHGKGVIVVGTLTPEQDPQQLIALSQKIGWPLLTDAQSQLRQHPAAIGNIDQLLQHPRARNLLQEADRVLVFGGRLLSKRVIGYLAEQNWHSYWQVLPEQDRLDPSHNAKHIWHANAEQFAALNWYRSSSANWANTLITYNDELHNLFVRNIDQGEFGEAQVIRAIANTRPLEQQLFIGNSLPVRLYDMYAPVSCCTATTYTNRGASGIDGLLATACGIAAHKGKATSLIIGDLSQLHDLNSLAIAKGLTSPLVIVILNNDGGNIFNLLPVPNEQVRSDYYRLSHGLEFGYAAAMFNLPYNQVDNLADFQDSYNEALDFQGASIIEVNVSQNQASDQIAALNLWVKQS</sequence>
<gene>
    <name evidence="1" type="primary">menD</name>
    <name type="ordered locus">Sbal195_4288</name>
</gene>
<proteinExistence type="inferred from homology"/>
<evidence type="ECO:0000255" key="1">
    <source>
        <dbReference type="HAMAP-Rule" id="MF_01659"/>
    </source>
</evidence>
<organism>
    <name type="scientific">Shewanella baltica (strain OS195)</name>
    <dbReference type="NCBI Taxonomy" id="399599"/>
    <lineage>
        <taxon>Bacteria</taxon>
        <taxon>Pseudomonadati</taxon>
        <taxon>Pseudomonadota</taxon>
        <taxon>Gammaproteobacteria</taxon>
        <taxon>Alteromonadales</taxon>
        <taxon>Shewanellaceae</taxon>
        <taxon>Shewanella</taxon>
    </lineage>
</organism>
<accession>A9KU65</accession>
<name>MEND_SHEB9</name>
<protein>
    <recommendedName>
        <fullName evidence="1">2-succinyl-5-enolpyruvyl-6-hydroxy-3-cyclohexene-1-carboxylate synthase</fullName>
        <shortName evidence="1">SEPHCHC synthase</shortName>
        <ecNumber evidence="1">2.2.1.9</ecNumber>
    </recommendedName>
    <alternativeName>
        <fullName evidence="1">Menaquinone biosynthesis protein MenD</fullName>
    </alternativeName>
</protein>
<comment type="function">
    <text evidence="1">Catalyzes the thiamine diphosphate-dependent decarboxylation of 2-oxoglutarate and the subsequent addition of the resulting succinic semialdehyde-thiamine pyrophosphate anion to isochorismate to yield 2-succinyl-5-enolpyruvyl-6-hydroxy-3-cyclohexene-1-carboxylate (SEPHCHC).</text>
</comment>
<comment type="catalytic activity">
    <reaction evidence="1">
        <text>isochorismate + 2-oxoglutarate + H(+) = 5-enolpyruvoyl-6-hydroxy-2-succinyl-cyclohex-3-ene-1-carboxylate + CO2</text>
        <dbReference type="Rhea" id="RHEA:25593"/>
        <dbReference type="ChEBI" id="CHEBI:15378"/>
        <dbReference type="ChEBI" id="CHEBI:16526"/>
        <dbReference type="ChEBI" id="CHEBI:16810"/>
        <dbReference type="ChEBI" id="CHEBI:29780"/>
        <dbReference type="ChEBI" id="CHEBI:58818"/>
        <dbReference type="EC" id="2.2.1.9"/>
    </reaction>
</comment>
<comment type="cofactor">
    <cofactor evidence="1">
        <name>Mg(2+)</name>
        <dbReference type="ChEBI" id="CHEBI:18420"/>
    </cofactor>
    <cofactor evidence="1">
        <name>Mn(2+)</name>
        <dbReference type="ChEBI" id="CHEBI:29035"/>
    </cofactor>
</comment>
<comment type="cofactor">
    <cofactor evidence="1">
        <name>thiamine diphosphate</name>
        <dbReference type="ChEBI" id="CHEBI:58937"/>
    </cofactor>
    <text evidence="1">Binds 1 thiamine pyrophosphate per subunit.</text>
</comment>
<comment type="pathway">
    <text evidence="1">Quinol/quinone metabolism; 1,4-dihydroxy-2-naphthoate biosynthesis; 1,4-dihydroxy-2-naphthoate from chorismate: step 2/7.</text>
</comment>
<comment type="pathway">
    <text evidence="1">Quinol/quinone metabolism; menaquinone biosynthesis.</text>
</comment>
<comment type="subunit">
    <text evidence="1">Homodimer.</text>
</comment>
<comment type="similarity">
    <text evidence="1">Belongs to the TPP enzyme family. MenD subfamily.</text>
</comment>
<feature type="chain" id="PRO_0000341830" description="2-succinyl-5-enolpyruvyl-6-hydroxy-3-cyclohexene-1-carboxylate synthase">
    <location>
        <begin position="1"/>
        <end position="573"/>
    </location>
</feature>
<dbReference type="EC" id="2.2.1.9" evidence="1"/>
<dbReference type="EMBL" id="CP000891">
    <property type="protein sequence ID" value="ABX51446.1"/>
    <property type="molecule type" value="Genomic_DNA"/>
</dbReference>
<dbReference type="RefSeq" id="WP_012197787.1">
    <property type="nucleotide sequence ID" value="NC_009997.1"/>
</dbReference>
<dbReference type="SMR" id="A9KU65"/>
<dbReference type="GeneID" id="11774269"/>
<dbReference type="KEGG" id="sbn:Sbal195_4288"/>
<dbReference type="HOGENOM" id="CLU_006051_3_0_6"/>
<dbReference type="UniPathway" id="UPA00079"/>
<dbReference type="UniPathway" id="UPA01057">
    <property type="reaction ID" value="UER00164"/>
</dbReference>
<dbReference type="Proteomes" id="UP000000770">
    <property type="component" value="Chromosome"/>
</dbReference>
<dbReference type="GO" id="GO:0070204">
    <property type="term" value="F:2-succinyl-5-enolpyruvyl-6-hydroxy-3-cyclohexene-1-carboxylic-acid synthase activity"/>
    <property type="evidence" value="ECO:0007669"/>
    <property type="project" value="UniProtKB-UniRule"/>
</dbReference>
<dbReference type="GO" id="GO:0000287">
    <property type="term" value="F:magnesium ion binding"/>
    <property type="evidence" value="ECO:0007669"/>
    <property type="project" value="UniProtKB-UniRule"/>
</dbReference>
<dbReference type="GO" id="GO:0030145">
    <property type="term" value="F:manganese ion binding"/>
    <property type="evidence" value="ECO:0007669"/>
    <property type="project" value="UniProtKB-UniRule"/>
</dbReference>
<dbReference type="GO" id="GO:0030976">
    <property type="term" value="F:thiamine pyrophosphate binding"/>
    <property type="evidence" value="ECO:0007669"/>
    <property type="project" value="UniProtKB-UniRule"/>
</dbReference>
<dbReference type="GO" id="GO:0009234">
    <property type="term" value="P:menaquinone biosynthetic process"/>
    <property type="evidence" value="ECO:0007669"/>
    <property type="project" value="UniProtKB-UniRule"/>
</dbReference>
<dbReference type="CDD" id="cd07037">
    <property type="entry name" value="TPP_PYR_MenD"/>
    <property type="match status" value="1"/>
</dbReference>
<dbReference type="CDD" id="cd02009">
    <property type="entry name" value="TPP_SHCHC_synthase"/>
    <property type="match status" value="1"/>
</dbReference>
<dbReference type="Gene3D" id="3.40.50.970">
    <property type="match status" value="2"/>
</dbReference>
<dbReference type="Gene3D" id="3.40.50.1220">
    <property type="entry name" value="TPP-binding domain"/>
    <property type="match status" value="1"/>
</dbReference>
<dbReference type="HAMAP" id="MF_01659">
    <property type="entry name" value="MenD"/>
    <property type="match status" value="1"/>
</dbReference>
<dbReference type="InterPro" id="IPR029035">
    <property type="entry name" value="DHS-like_NAD/FAD-binding_dom"/>
</dbReference>
<dbReference type="InterPro" id="IPR004433">
    <property type="entry name" value="MenaQ_synth_MenD"/>
</dbReference>
<dbReference type="InterPro" id="IPR032264">
    <property type="entry name" value="MenD_middle"/>
</dbReference>
<dbReference type="InterPro" id="IPR029061">
    <property type="entry name" value="THDP-binding"/>
</dbReference>
<dbReference type="InterPro" id="IPR012001">
    <property type="entry name" value="Thiamin_PyroP_enz_TPP-bd_dom"/>
</dbReference>
<dbReference type="InterPro" id="IPR011766">
    <property type="entry name" value="TPP_enzyme_TPP-bd"/>
</dbReference>
<dbReference type="NCBIfam" id="TIGR00173">
    <property type="entry name" value="menD"/>
    <property type="match status" value="1"/>
</dbReference>
<dbReference type="PANTHER" id="PTHR42916">
    <property type="entry name" value="2-SUCCINYL-5-ENOLPYRUVYL-6-HYDROXY-3-CYCLOHEXENE-1-CARBOXYLATE SYNTHASE"/>
    <property type="match status" value="1"/>
</dbReference>
<dbReference type="PANTHER" id="PTHR42916:SF1">
    <property type="entry name" value="PROTEIN PHYLLO, CHLOROPLASTIC"/>
    <property type="match status" value="1"/>
</dbReference>
<dbReference type="Pfam" id="PF02775">
    <property type="entry name" value="TPP_enzyme_C"/>
    <property type="match status" value="1"/>
</dbReference>
<dbReference type="Pfam" id="PF16582">
    <property type="entry name" value="TPP_enzyme_M_2"/>
    <property type="match status" value="1"/>
</dbReference>
<dbReference type="Pfam" id="PF02776">
    <property type="entry name" value="TPP_enzyme_N"/>
    <property type="match status" value="1"/>
</dbReference>
<dbReference type="PIRSF" id="PIRSF004983">
    <property type="entry name" value="MenD"/>
    <property type="match status" value="1"/>
</dbReference>
<dbReference type="SUPFAM" id="SSF52467">
    <property type="entry name" value="DHS-like NAD/FAD-binding domain"/>
    <property type="match status" value="1"/>
</dbReference>
<dbReference type="SUPFAM" id="SSF52518">
    <property type="entry name" value="Thiamin diphosphate-binding fold (THDP-binding)"/>
    <property type="match status" value="2"/>
</dbReference>
<keyword id="KW-0460">Magnesium</keyword>
<keyword id="KW-0464">Manganese</keyword>
<keyword id="KW-0474">Menaquinone biosynthesis</keyword>
<keyword id="KW-0479">Metal-binding</keyword>
<keyword id="KW-0786">Thiamine pyrophosphate</keyword>
<keyword id="KW-0808">Transferase</keyword>